<organism>
    <name type="scientific">Arabidopsis thaliana</name>
    <name type="common">Mouse-ear cress</name>
    <dbReference type="NCBI Taxonomy" id="3702"/>
    <lineage>
        <taxon>Eukaryota</taxon>
        <taxon>Viridiplantae</taxon>
        <taxon>Streptophyta</taxon>
        <taxon>Embryophyta</taxon>
        <taxon>Tracheophyta</taxon>
        <taxon>Spermatophyta</taxon>
        <taxon>Magnoliopsida</taxon>
        <taxon>eudicotyledons</taxon>
        <taxon>Gunneridae</taxon>
        <taxon>Pentapetalae</taxon>
        <taxon>rosids</taxon>
        <taxon>malvids</taxon>
        <taxon>Brassicales</taxon>
        <taxon>Brassicaceae</taxon>
        <taxon>Camelineae</taxon>
        <taxon>Arabidopsis</taxon>
    </lineage>
</organism>
<keyword id="KW-0067">ATP-binding</keyword>
<keyword id="KW-1003">Cell membrane</keyword>
<keyword id="KW-1015">Disulfide bond</keyword>
<keyword id="KW-0245">EGF-like domain</keyword>
<keyword id="KW-0325">Glycoprotein</keyword>
<keyword id="KW-0418">Kinase</keyword>
<keyword id="KW-0430">Lectin</keyword>
<keyword id="KW-0472">Membrane</keyword>
<keyword id="KW-0547">Nucleotide-binding</keyword>
<keyword id="KW-0597">Phosphoprotein</keyword>
<keyword id="KW-0611">Plant defense</keyword>
<keyword id="KW-0675">Receptor</keyword>
<keyword id="KW-1185">Reference proteome</keyword>
<keyword id="KW-0723">Serine/threonine-protein kinase</keyword>
<keyword id="KW-0732">Signal</keyword>
<keyword id="KW-0808">Transferase</keyword>
<keyword id="KW-0812">Transmembrane</keyword>
<keyword id="KW-1133">Transmembrane helix</keyword>
<name>SD129_ARATH</name>
<comment type="function">
    <text evidence="9 10 11">S-domain receptor protein kinase involved in lipopolysaccharide (LPS) sensing (PubMed:25729922, PubMed:29431629, PubMed:31922267). Specifically detects LPS of Pseudomonas and Xanthomonas species (PubMed:25729922). LPS are major components of the outer membrane of Gram-negative bacteria and are important microbe-associated molecular patterns (MAMPs) that trigger biphasic production of reactive oxygen species (ROS) and immune responses in plants (PubMed:25729922, PubMed:29431629). Seems to be only partially associated with the second LPS-triggered ROS burst (PubMed:29431629). Mediates defense signaling in response to the medium-chain 3-hydroxy fatty acid 3-OH-C10:0, a pathogen-associated molecular pattern (PAMP) which induces autophosphorylation at Tyr-600 (PubMed:31922267). Autophosphorylation at Tyr-600 is required for downstream phosphorylation of the receptor-like cytoplasmic kinase PBL34, PBL35 and PBL36, and activation of plant immunity (PubMed:31922267).</text>
</comment>
<comment type="function">
    <text evidence="11">(Microbial infection) Targeted by the bacterial type III effector protein tyrosine phosphatase HopAO1 from Pseudomonas syringae (PubMed:31922267). HopAO1 dephosphorylates Tyr-600, which suppresses the immune response (PubMed:31922267).</text>
</comment>
<comment type="catalytic activity">
    <reaction evidence="11">
        <text>L-seryl-[protein] + ATP = O-phospho-L-seryl-[protein] + ADP + H(+)</text>
        <dbReference type="Rhea" id="RHEA:17989"/>
        <dbReference type="Rhea" id="RHEA-COMP:9863"/>
        <dbReference type="Rhea" id="RHEA-COMP:11604"/>
        <dbReference type="ChEBI" id="CHEBI:15378"/>
        <dbReference type="ChEBI" id="CHEBI:29999"/>
        <dbReference type="ChEBI" id="CHEBI:30616"/>
        <dbReference type="ChEBI" id="CHEBI:83421"/>
        <dbReference type="ChEBI" id="CHEBI:456216"/>
        <dbReference type="EC" id="2.7.12.1"/>
    </reaction>
    <physiologicalReaction direction="left-to-right" evidence="11">
        <dbReference type="Rhea" id="RHEA:17990"/>
    </physiologicalReaction>
</comment>
<comment type="catalytic activity">
    <reaction evidence="11">
        <text>L-threonyl-[protein] + ATP = O-phospho-L-threonyl-[protein] + ADP + H(+)</text>
        <dbReference type="Rhea" id="RHEA:46608"/>
        <dbReference type="Rhea" id="RHEA-COMP:11060"/>
        <dbReference type="Rhea" id="RHEA-COMP:11605"/>
        <dbReference type="ChEBI" id="CHEBI:15378"/>
        <dbReference type="ChEBI" id="CHEBI:30013"/>
        <dbReference type="ChEBI" id="CHEBI:30616"/>
        <dbReference type="ChEBI" id="CHEBI:61977"/>
        <dbReference type="ChEBI" id="CHEBI:456216"/>
        <dbReference type="EC" id="2.7.12.1"/>
    </reaction>
    <physiologicalReaction direction="left-to-right" evidence="11">
        <dbReference type="Rhea" id="RHEA:46609"/>
    </physiologicalReaction>
</comment>
<comment type="catalytic activity">
    <reaction evidence="11">
        <text>L-tyrosyl-[protein] + ATP = O-phospho-L-tyrosyl-[protein] + ADP + H(+)</text>
        <dbReference type="Rhea" id="RHEA:10596"/>
        <dbReference type="Rhea" id="RHEA-COMP:10136"/>
        <dbReference type="Rhea" id="RHEA-COMP:20101"/>
        <dbReference type="ChEBI" id="CHEBI:15378"/>
        <dbReference type="ChEBI" id="CHEBI:30616"/>
        <dbReference type="ChEBI" id="CHEBI:46858"/>
        <dbReference type="ChEBI" id="CHEBI:61978"/>
        <dbReference type="ChEBI" id="CHEBI:456216"/>
        <dbReference type="EC" id="2.7.12.1"/>
    </reaction>
    <physiologicalReaction direction="left-to-right" evidence="11">
        <dbReference type="Rhea" id="RHEA:10597"/>
    </physiologicalReaction>
</comment>
<comment type="subunit">
    <text evidence="8 11">Interacts with PUB9, PUB13, PUB14, PUB29, PUB38, PUB44 and PUB45 (PubMed:18552232). Interacts with PBL34, PBL35 and PBL36 (PubMed:31922267).</text>
</comment>
<comment type="subcellular location">
    <subcellularLocation>
        <location evidence="9 11">Cell membrane</location>
        <topology evidence="3">Single-pass type I membrane protein</topology>
    </subcellularLocation>
</comment>
<comment type="induction">
    <text evidence="10">Repressed by miR393a (microRNA) in response to bacterial lipopolysaccharides (LPS) treatment.</text>
</comment>
<comment type="PTM">
    <text evidence="11">Autophosphorylated at Tyr-600 (PubMed:31922267). Autophosphorylation at Tyr-600 is required for downstream phosphorylation of the receptor-like cytoplasmic kinase PBL34, PBL35 and PBL36, and activation of plant immunity (PubMed:31922267).</text>
</comment>
<comment type="disruption phenotype">
    <text evidence="9">No visible phenotype under normal growth conditions, but mutant plants are hyper-susceptible to infection by the bacterial pathogen Pseudomonas syringae.</text>
</comment>
<comment type="similarity">
    <text evidence="5">Belongs to the protein kinase superfamily. Ser/Thr protein kinase family.</text>
</comment>
<feature type="signal peptide" evidence="3">
    <location>
        <begin position="1"/>
        <end position="21"/>
    </location>
</feature>
<feature type="chain" id="PRO_0000401302" description="G-type lectin S-receptor-like serine/threonine-protein kinase SD1-29">
    <location>
        <begin position="22"/>
        <end position="805"/>
    </location>
</feature>
<feature type="topological domain" description="Extracellular" evidence="3">
    <location>
        <begin position="22"/>
        <end position="428"/>
    </location>
</feature>
<feature type="transmembrane region" description="Helical" evidence="3">
    <location>
        <begin position="429"/>
        <end position="449"/>
    </location>
</feature>
<feature type="topological domain" description="Cytoplasmic" evidence="3">
    <location>
        <begin position="450"/>
        <end position="805"/>
    </location>
</feature>
<feature type="domain" description="Bulb-type lectin" evidence="4">
    <location>
        <begin position="22"/>
        <end position="141"/>
    </location>
</feature>
<feature type="domain" description="EGF-like">
    <location>
        <begin position="277"/>
        <end position="313"/>
    </location>
</feature>
<feature type="domain" description="PAN" evidence="6">
    <location>
        <begin position="332"/>
        <end position="418"/>
    </location>
</feature>
<feature type="domain" description="Protein kinase" evidence="5">
    <location>
        <begin position="488"/>
        <end position="773"/>
    </location>
</feature>
<feature type="region of interest" description="CaM-binding" evidence="1">
    <location>
        <begin position="577"/>
        <end position="594"/>
    </location>
</feature>
<feature type="active site" description="Proton acceptor" evidence="5 7">
    <location>
        <position position="613"/>
    </location>
</feature>
<feature type="binding site" evidence="5">
    <location>
        <begin position="494"/>
        <end position="502"/>
    </location>
    <ligand>
        <name>ATP</name>
        <dbReference type="ChEBI" id="CHEBI:30616"/>
    </ligand>
</feature>
<feature type="binding site" evidence="5">
    <location>
        <position position="516"/>
    </location>
    <ligand>
        <name>ATP</name>
        <dbReference type="ChEBI" id="CHEBI:30616"/>
    </ligand>
</feature>
<feature type="modified residue" description="Phosphoserine" evidence="2">
    <location>
        <position position="522"/>
    </location>
</feature>
<feature type="modified residue" description="Phosphoserine" evidence="2">
    <location>
        <position position="537"/>
    </location>
</feature>
<feature type="modified residue" description="Phosphotyrosine" evidence="11">
    <location>
        <position position="600"/>
    </location>
</feature>
<feature type="modified residue" description="Phosphoserine" evidence="2">
    <location>
        <position position="617"/>
    </location>
</feature>
<feature type="modified residue" description="Phosphoserine" evidence="2">
    <location>
        <position position="630"/>
    </location>
</feature>
<feature type="modified residue" description="Phosphothreonine" evidence="2">
    <location>
        <position position="647"/>
    </location>
</feature>
<feature type="modified residue" description="Phosphoserine" evidence="2">
    <location>
        <position position="690"/>
    </location>
</feature>
<feature type="modified residue" description="Phosphoserine" evidence="2">
    <location>
        <position position="793"/>
    </location>
</feature>
<feature type="glycosylation site" description="N-linked (GlcNAc...) asparagine" evidence="3">
    <location>
        <position position="24"/>
    </location>
</feature>
<feature type="glycosylation site" description="N-linked (GlcNAc...) asparagine" evidence="3">
    <location>
        <position position="50"/>
    </location>
</feature>
<feature type="glycosylation site" description="N-linked (GlcNAc...) asparagine" evidence="3">
    <location>
        <position position="85"/>
    </location>
</feature>
<feature type="glycosylation site" description="N-linked (GlcNAc...) asparagine" evidence="3">
    <location>
        <position position="91"/>
    </location>
</feature>
<feature type="glycosylation site" description="N-linked (GlcNAc...) asparagine" evidence="3">
    <location>
        <position position="248"/>
    </location>
</feature>
<feature type="glycosylation site" description="N-linked (GlcNAc...) asparagine" evidence="3">
    <location>
        <position position="319"/>
    </location>
</feature>
<feature type="glycosylation site" description="N-linked (GlcNAc...) asparagine" evidence="3">
    <location>
        <position position="378"/>
    </location>
</feature>
<feature type="disulfide bond" evidence="1">
    <location>
        <begin position="281"/>
        <end position="293"/>
    </location>
</feature>
<feature type="disulfide bond" evidence="1">
    <location>
        <begin position="287"/>
        <end position="301"/>
    </location>
</feature>
<feature type="disulfide bond" evidence="6">
    <location>
        <begin position="371"/>
        <end position="392"/>
    </location>
</feature>
<feature type="disulfide bond" evidence="6">
    <location>
        <begin position="375"/>
        <end position="381"/>
    </location>
</feature>
<feature type="mutagenesis site" description="Loss of autophosphorylation; when associated with V-613." evidence="11">
    <original>K</original>
    <variation>E</variation>
    <location>
        <position position="516"/>
    </location>
</feature>
<feature type="mutagenesis site" description="Unable to phosphorylate PBL34.">
    <original>Y</original>
    <variation>F</variation>
    <location>
        <position position="600"/>
    </location>
</feature>
<feature type="mutagenesis site" description="Loss of autophosphorylation; when associated with E-516." evidence="11">
    <original>D</original>
    <variation>V</variation>
    <location>
        <position position="613"/>
    </location>
</feature>
<feature type="sequence conflict" description="In Ref. 4; AAM61715." evidence="14" ref="4">
    <original>Q</original>
    <variation>R</variation>
    <location>
        <position position="53"/>
    </location>
</feature>
<feature type="sequence conflict" description="In Ref. 4; AAM61715." evidence="14" ref="4">
    <original>Q</original>
    <variation>E</variation>
    <location>
        <position position="101"/>
    </location>
</feature>
<feature type="sequence conflict" description="In Ref. 4; AAM61715." evidence="14" ref="4">
    <original>T</original>
    <variation>S</variation>
    <location>
        <position position="112"/>
    </location>
</feature>
<feature type="sequence conflict" description="In Ref. 4; AAM61715." evidence="14" ref="4">
    <original>E</original>
    <variation>Q</variation>
    <location>
        <position position="119"/>
    </location>
</feature>
<feature type="sequence conflict" description="In Ref. 4; AAM61715." evidence="14" ref="4">
    <original>K</original>
    <variation>Q</variation>
    <location>
        <position position="259"/>
    </location>
</feature>
<feature type="sequence conflict" description="In Ref. 4; AAM61715." evidence="14" ref="4">
    <original>N</original>
    <variation>D</variation>
    <location>
        <position position="269"/>
    </location>
</feature>
<feature type="sequence conflict" description="In Ref. 4; AAM61715." evidence="14" ref="4">
    <original>F</original>
    <variation>I</variation>
    <location>
        <position position="411"/>
    </location>
</feature>
<feature type="sequence conflict" description="In Ref. 4; AAM61715." evidence="14" ref="4">
    <original>D</original>
    <variation>N</variation>
    <location>
        <position position="613"/>
    </location>
</feature>
<reference key="1">
    <citation type="journal article" date="2000" name="Nature">
        <title>Sequence and analysis of chromosome 1 of the plant Arabidopsis thaliana.</title>
        <authorList>
            <person name="Theologis A."/>
            <person name="Ecker J.R."/>
            <person name="Palm C.J."/>
            <person name="Federspiel N.A."/>
            <person name="Kaul S."/>
            <person name="White O."/>
            <person name="Alonso J."/>
            <person name="Altafi H."/>
            <person name="Araujo R."/>
            <person name="Bowman C.L."/>
            <person name="Brooks S.Y."/>
            <person name="Buehler E."/>
            <person name="Chan A."/>
            <person name="Chao Q."/>
            <person name="Chen H."/>
            <person name="Cheuk R.F."/>
            <person name="Chin C.W."/>
            <person name="Chung M.K."/>
            <person name="Conn L."/>
            <person name="Conway A.B."/>
            <person name="Conway A.R."/>
            <person name="Creasy T.H."/>
            <person name="Dewar K."/>
            <person name="Dunn P."/>
            <person name="Etgu P."/>
            <person name="Feldblyum T.V."/>
            <person name="Feng J.-D."/>
            <person name="Fong B."/>
            <person name="Fujii C.Y."/>
            <person name="Gill J.E."/>
            <person name="Goldsmith A.D."/>
            <person name="Haas B."/>
            <person name="Hansen N.F."/>
            <person name="Hughes B."/>
            <person name="Huizar L."/>
            <person name="Hunter J.L."/>
            <person name="Jenkins J."/>
            <person name="Johnson-Hopson C."/>
            <person name="Khan S."/>
            <person name="Khaykin E."/>
            <person name="Kim C.J."/>
            <person name="Koo H.L."/>
            <person name="Kremenetskaia I."/>
            <person name="Kurtz D.B."/>
            <person name="Kwan A."/>
            <person name="Lam B."/>
            <person name="Langin-Hooper S."/>
            <person name="Lee A."/>
            <person name="Lee J.M."/>
            <person name="Lenz C.A."/>
            <person name="Li J.H."/>
            <person name="Li Y.-P."/>
            <person name="Lin X."/>
            <person name="Liu S.X."/>
            <person name="Liu Z.A."/>
            <person name="Luros J.S."/>
            <person name="Maiti R."/>
            <person name="Marziali A."/>
            <person name="Militscher J."/>
            <person name="Miranda M."/>
            <person name="Nguyen M."/>
            <person name="Nierman W.C."/>
            <person name="Osborne B.I."/>
            <person name="Pai G."/>
            <person name="Peterson J."/>
            <person name="Pham P.K."/>
            <person name="Rizzo M."/>
            <person name="Rooney T."/>
            <person name="Rowley D."/>
            <person name="Sakano H."/>
            <person name="Salzberg S.L."/>
            <person name="Schwartz J.R."/>
            <person name="Shinn P."/>
            <person name="Southwick A.M."/>
            <person name="Sun H."/>
            <person name="Tallon L.J."/>
            <person name="Tambunga G."/>
            <person name="Toriumi M.J."/>
            <person name="Town C.D."/>
            <person name="Utterback T."/>
            <person name="Van Aken S."/>
            <person name="Vaysberg M."/>
            <person name="Vysotskaia V.S."/>
            <person name="Walker M."/>
            <person name="Wu D."/>
            <person name="Yu G."/>
            <person name="Fraser C.M."/>
            <person name="Venter J.C."/>
            <person name="Davis R.W."/>
        </authorList>
    </citation>
    <scope>NUCLEOTIDE SEQUENCE [LARGE SCALE GENOMIC DNA]</scope>
    <source>
        <strain>cv. Columbia</strain>
    </source>
</reference>
<reference key="2">
    <citation type="journal article" date="2017" name="Plant J.">
        <title>Araport11: a complete reannotation of the Arabidopsis thaliana reference genome.</title>
        <authorList>
            <person name="Cheng C.Y."/>
            <person name="Krishnakumar V."/>
            <person name="Chan A.P."/>
            <person name="Thibaud-Nissen F."/>
            <person name="Schobel S."/>
            <person name="Town C.D."/>
        </authorList>
    </citation>
    <scope>GENOME REANNOTATION</scope>
    <source>
        <strain>cv. Columbia</strain>
    </source>
</reference>
<reference key="3">
    <citation type="journal article" date="2003" name="Science">
        <title>Empirical analysis of transcriptional activity in the Arabidopsis genome.</title>
        <authorList>
            <person name="Yamada K."/>
            <person name="Lim J."/>
            <person name="Dale J.M."/>
            <person name="Chen H."/>
            <person name="Shinn P."/>
            <person name="Palm C.J."/>
            <person name="Southwick A.M."/>
            <person name="Wu H.C."/>
            <person name="Kim C.J."/>
            <person name="Nguyen M."/>
            <person name="Pham P.K."/>
            <person name="Cheuk R.F."/>
            <person name="Karlin-Newmann G."/>
            <person name="Liu S.X."/>
            <person name="Lam B."/>
            <person name="Sakano H."/>
            <person name="Wu T."/>
            <person name="Yu G."/>
            <person name="Miranda M."/>
            <person name="Quach H.L."/>
            <person name="Tripp M."/>
            <person name="Chang C.H."/>
            <person name="Lee J.M."/>
            <person name="Toriumi M.J."/>
            <person name="Chan M.M."/>
            <person name="Tang C.C."/>
            <person name="Onodera C.S."/>
            <person name="Deng J.M."/>
            <person name="Akiyama K."/>
            <person name="Ansari Y."/>
            <person name="Arakawa T."/>
            <person name="Banh J."/>
            <person name="Banno F."/>
            <person name="Bowser L."/>
            <person name="Brooks S.Y."/>
            <person name="Carninci P."/>
            <person name="Chao Q."/>
            <person name="Choy N."/>
            <person name="Enju A."/>
            <person name="Goldsmith A.D."/>
            <person name="Gurjal M."/>
            <person name="Hansen N.F."/>
            <person name="Hayashizaki Y."/>
            <person name="Johnson-Hopson C."/>
            <person name="Hsuan V.W."/>
            <person name="Iida K."/>
            <person name="Karnes M."/>
            <person name="Khan S."/>
            <person name="Koesema E."/>
            <person name="Ishida J."/>
            <person name="Jiang P.X."/>
            <person name="Jones T."/>
            <person name="Kawai J."/>
            <person name="Kamiya A."/>
            <person name="Meyers C."/>
            <person name="Nakajima M."/>
            <person name="Narusaka M."/>
            <person name="Seki M."/>
            <person name="Sakurai T."/>
            <person name="Satou M."/>
            <person name="Tamse R."/>
            <person name="Vaysberg M."/>
            <person name="Wallender E.K."/>
            <person name="Wong C."/>
            <person name="Yamamura Y."/>
            <person name="Yuan S."/>
            <person name="Shinozaki K."/>
            <person name="Davis R.W."/>
            <person name="Theologis A."/>
            <person name="Ecker J.R."/>
        </authorList>
    </citation>
    <scope>NUCLEOTIDE SEQUENCE [LARGE SCALE MRNA]</scope>
    <source>
        <strain>cv. Columbia</strain>
    </source>
</reference>
<reference key="4">
    <citation type="submission" date="2002-03" db="EMBL/GenBank/DDBJ databases">
        <title>Full-length cDNA from Arabidopsis thaliana.</title>
        <authorList>
            <person name="Brover V.V."/>
            <person name="Troukhan M.E."/>
            <person name="Alexandrov N.A."/>
            <person name="Lu Y.-P."/>
            <person name="Flavell R.B."/>
            <person name="Feldmann K.A."/>
        </authorList>
    </citation>
    <scope>NUCLEOTIDE SEQUENCE [LARGE SCALE MRNA]</scope>
</reference>
<reference key="5">
    <citation type="journal article" date="2008" name="Plant Physiol.">
        <title>Interactions between the S-domain receptor kinases and AtPUB-ARM E3 ubiquitin ligases suggest a conserved signaling pathway in Arabidopsis.</title>
        <authorList>
            <person name="Samuel M.A."/>
            <person name="Mudgil Y."/>
            <person name="Salt J.N."/>
            <person name="Delmas F."/>
            <person name="Ramachandran S."/>
            <person name="Chilelli A."/>
            <person name="Goring D.R."/>
        </authorList>
    </citation>
    <scope>GENE FAMILY</scope>
    <scope>NOMENCLATURE</scope>
    <scope>INTERACTION WITH PUB9; PUB13; PUB14; PUB29; PUB38; PUB44 AND PUB45</scope>
</reference>
<reference key="6">
    <citation type="journal article" date="2015" name="Nat. Immunol.">
        <title>A lectin S-domain receptor kinase mediates lipopolysaccharide sensing in Arabidopsis thaliana.</title>
        <authorList>
            <person name="Ranf S."/>
            <person name="Gisch N."/>
            <person name="Schaeffer M."/>
            <person name="Illig T."/>
            <person name="Westphal L."/>
            <person name="Knirel Y.A."/>
            <person name="Sanchez-Carballo P.M."/>
            <person name="Zaehringer U."/>
            <person name="Hueckelhoven R."/>
            <person name="Lee J."/>
            <person name="Scheel D."/>
        </authorList>
    </citation>
    <scope>FUNCTION</scope>
    <scope>SUBCELLULAR LOCATION</scope>
    <scope>DISRUPTION PHENOTYPE</scope>
</reference>
<reference key="7">
    <citation type="journal article" date="2018" name="Plant Physiol.">
        <title>Lipopolysaccharides trigger two successive bursts of reactive oxygen species at distinct cellular locations.</title>
        <authorList>
            <person name="Shang-Guan K."/>
            <person name="Wang M."/>
            <person name="Htwe N.M.P.S."/>
            <person name="Li P."/>
            <person name="Li Y."/>
            <person name="Qi F."/>
            <person name="Zhang D."/>
            <person name="Cao M."/>
            <person name="Kim C."/>
            <person name="Weng H."/>
            <person name="Cen H."/>
            <person name="Black I.M."/>
            <person name="Azadi P."/>
            <person name="Carlson R.W."/>
            <person name="Stacey G."/>
            <person name="Liang Y."/>
        </authorList>
    </citation>
    <scope>FUNCTION</scope>
</reference>
<reference key="8">
    <citation type="journal article" date="2019" name="Biochem. Biophys. Res. Commun.">
        <title>miR393 regulation of lectin receptor-like kinases associated with LPS perception in Arabidopsis thaliana.</title>
        <authorList>
            <person name="Djami-Tchatchou A.T."/>
            <person name="Dubery I.A."/>
        </authorList>
    </citation>
    <scope>INDUCTION</scope>
</reference>
<reference key="9">
    <citation type="journal article" date="2020" name="EMBO J.">
        <title>Tyrosine phosphorylation of the lectin receptor-like kinase LORE regulates plant immunity.</title>
        <authorList>
            <person name="Luo X."/>
            <person name="Wu W."/>
            <person name="Liang Y."/>
            <person name="Xu N."/>
            <person name="Wang Z."/>
            <person name="Zou H."/>
            <person name="Liu J."/>
        </authorList>
    </citation>
    <scope>FUNCTION</scope>
    <scope>CATALYTIC ACTIVITY</scope>
    <scope>INTERACTION WITH PBL34; PBL35 AND PBL36</scope>
    <scope>PHOSPHORYLATION AT TYR-600</scope>
    <scope>MUTAGENESIS OF LYS-516; TYR-600 AND ASP-613</scope>
</reference>
<dbReference type="EC" id="2.7.12.1" evidence="11"/>
<dbReference type="EMBL" id="AC004255">
    <property type="protein sequence ID" value="AAC13903.1"/>
    <property type="molecule type" value="Genomic_DNA"/>
</dbReference>
<dbReference type="EMBL" id="CP002684">
    <property type="protein sequence ID" value="AEE33829.1"/>
    <property type="molecule type" value="Genomic_DNA"/>
</dbReference>
<dbReference type="EMBL" id="AY090241">
    <property type="protein sequence ID" value="AAL90905.1"/>
    <property type="molecule type" value="mRNA"/>
</dbReference>
<dbReference type="EMBL" id="BT000638">
    <property type="protein sequence ID" value="AAN18204.1"/>
    <property type="molecule type" value="mRNA"/>
</dbReference>
<dbReference type="EMBL" id="AY085162">
    <property type="protein sequence ID" value="AAM61715.1"/>
    <property type="molecule type" value="mRNA"/>
</dbReference>
<dbReference type="RefSeq" id="NP_564775.1">
    <property type="nucleotide sequence ID" value="NM_104819.2"/>
</dbReference>
<dbReference type="SMR" id="O64782"/>
<dbReference type="FunCoup" id="O64782">
    <property type="interactions" value="3"/>
</dbReference>
<dbReference type="STRING" id="3702.O64782"/>
<dbReference type="GlyCosmos" id="O64782">
    <property type="glycosylation" value="7 sites, No reported glycans"/>
</dbReference>
<dbReference type="GlyGen" id="O64782">
    <property type="glycosylation" value="7 sites"/>
</dbReference>
<dbReference type="iPTMnet" id="O64782"/>
<dbReference type="PaxDb" id="3702-AT1G61380.1"/>
<dbReference type="ProteomicsDB" id="232752"/>
<dbReference type="EnsemblPlants" id="AT1G61380.1">
    <property type="protein sequence ID" value="AT1G61380.1"/>
    <property type="gene ID" value="AT1G61380"/>
</dbReference>
<dbReference type="GeneID" id="842432"/>
<dbReference type="Gramene" id="AT1G61380.1">
    <property type="protein sequence ID" value="AT1G61380.1"/>
    <property type="gene ID" value="AT1G61380"/>
</dbReference>
<dbReference type="KEGG" id="ath:AT1G61380"/>
<dbReference type="Araport" id="AT1G61380"/>
<dbReference type="TAIR" id="AT1G61380">
    <property type="gene designation" value="SD1-29"/>
</dbReference>
<dbReference type="HOGENOM" id="CLU_000288_116_1_1"/>
<dbReference type="InParanoid" id="O64782"/>
<dbReference type="OMA" id="RKELSCQ"/>
<dbReference type="PhylomeDB" id="O64782"/>
<dbReference type="PRO" id="PR:O64782"/>
<dbReference type="Proteomes" id="UP000006548">
    <property type="component" value="Chromosome 1"/>
</dbReference>
<dbReference type="ExpressionAtlas" id="O64782">
    <property type="expression patterns" value="baseline and differential"/>
</dbReference>
<dbReference type="GO" id="GO:0005886">
    <property type="term" value="C:plasma membrane"/>
    <property type="evidence" value="ECO:0000314"/>
    <property type="project" value="UniProtKB"/>
</dbReference>
<dbReference type="GO" id="GO:0005524">
    <property type="term" value="F:ATP binding"/>
    <property type="evidence" value="ECO:0007669"/>
    <property type="project" value="UniProtKB-KW"/>
</dbReference>
<dbReference type="GO" id="GO:0005516">
    <property type="term" value="F:calmodulin binding"/>
    <property type="evidence" value="ECO:0000250"/>
    <property type="project" value="UniProtKB"/>
</dbReference>
<dbReference type="GO" id="GO:0030246">
    <property type="term" value="F:carbohydrate binding"/>
    <property type="evidence" value="ECO:0007669"/>
    <property type="project" value="UniProtKB-KW"/>
</dbReference>
<dbReference type="GO" id="GO:0038187">
    <property type="term" value="F:pattern recognition receptor activity"/>
    <property type="evidence" value="ECO:0000315"/>
    <property type="project" value="TAIR"/>
</dbReference>
<dbReference type="GO" id="GO:0004672">
    <property type="term" value="F:protein kinase activity"/>
    <property type="evidence" value="ECO:0000314"/>
    <property type="project" value="TAIR"/>
</dbReference>
<dbReference type="GO" id="GO:0106310">
    <property type="term" value="F:protein serine kinase activity"/>
    <property type="evidence" value="ECO:0007669"/>
    <property type="project" value="RHEA"/>
</dbReference>
<dbReference type="GO" id="GO:0004674">
    <property type="term" value="F:protein serine/threonine kinase activity"/>
    <property type="evidence" value="ECO:0000314"/>
    <property type="project" value="UniProtKB"/>
</dbReference>
<dbReference type="GO" id="GO:0004712">
    <property type="term" value="F:protein serine/threonine/tyrosine kinase activity"/>
    <property type="evidence" value="ECO:0007669"/>
    <property type="project" value="UniProtKB-EC"/>
</dbReference>
<dbReference type="GO" id="GO:0004713">
    <property type="term" value="F:protein tyrosine kinase activity"/>
    <property type="evidence" value="ECO:0000314"/>
    <property type="project" value="UniProtKB"/>
</dbReference>
<dbReference type="GO" id="GO:0031625">
    <property type="term" value="F:ubiquitin protein ligase binding"/>
    <property type="evidence" value="ECO:0000353"/>
    <property type="project" value="UniProtKB"/>
</dbReference>
<dbReference type="GO" id="GO:0032497">
    <property type="term" value="P:detection of lipopolysaccharide"/>
    <property type="evidence" value="ECO:0000315"/>
    <property type="project" value="TAIR"/>
</dbReference>
<dbReference type="GO" id="GO:0045087">
    <property type="term" value="P:innate immune response"/>
    <property type="evidence" value="ECO:0000315"/>
    <property type="project" value="TAIR"/>
</dbReference>
<dbReference type="GO" id="GO:0031663">
    <property type="term" value="P:lipopolysaccharide-mediated signaling pathway"/>
    <property type="evidence" value="ECO:0000314"/>
    <property type="project" value="UniProtKB"/>
</dbReference>
<dbReference type="GO" id="GO:0002221">
    <property type="term" value="P:pattern recognition receptor signaling pathway"/>
    <property type="evidence" value="ECO:0000315"/>
    <property type="project" value="TAIR"/>
</dbReference>
<dbReference type="GO" id="GO:0046777">
    <property type="term" value="P:protein autophosphorylation"/>
    <property type="evidence" value="ECO:0000314"/>
    <property type="project" value="UniProtKB"/>
</dbReference>
<dbReference type="GO" id="GO:0048544">
    <property type="term" value="P:recognition of pollen"/>
    <property type="evidence" value="ECO:0007669"/>
    <property type="project" value="InterPro"/>
</dbReference>
<dbReference type="CDD" id="cd00028">
    <property type="entry name" value="B_lectin"/>
    <property type="match status" value="1"/>
</dbReference>
<dbReference type="CDD" id="cd01098">
    <property type="entry name" value="PAN_AP_plant"/>
    <property type="match status" value="1"/>
</dbReference>
<dbReference type="CDD" id="cd14066">
    <property type="entry name" value="STKc_IRAK"/>
    <property type="match status" value="1"/>
</dbReference>
<dbReference type="FunFam" id="1.10.510.10:FF:000345">
    <property type="entry name" value="G-type lectin S-receptor-like serine/threonine-protein kinase"/>
    <property type="match status" value="1"/>
</dbReference>
<dbReference type="FunFam" id="2.90.10.10:FF:000003">
    <property type="entry name" value="G-type lectin S-receptor-like serine/threonine-protein kinase"/>
    <property type="match status" value="1"/>
</dbReference>
<dbReference type="FunFam" id="3.30.200.20:FF:000401">
    <property type="entry name" value="G-type lectin S-receptor-like serine/threonine-protein kinase SD1-29"/>
    <property type="match status" value="1"/>
</dbReference>
<dbReference type="Gene3D" id="2.90.10.10">
    <property type="entry name" value="Bulb-type lectin domain"/>
    <property type="match status" value="1"/>
</dbReference>
<dbReference type="Gene3D" id="3.30.200.20">
    <property type="entry name" value="Phosphorylase Kinase, domain 1"/>
    <property type="match status" value="1"/>
</dbReference>
<dbReference type="Gene3D" id="1.10.510.10">
    <property type="entry name" value="Transferase(Phosphotransferase) domain 1"/>
    <property type="match status" value="1"/>
</dbReference>
<dbReference type="InterPro" id="IPR001480">
    <property type="entry name" value="Bulb-type_lectin_dom"/>
</dbReference>
<dbReference type="InterPro" id="IPR036426">
    <property type="entry name" value="Bulb-type_lectin_dom_sf"/>
</dbReference>
<dbReference type="InterPro" id="IPR011009">
    <property type="entry name" value="Kinase-like_dom_sf"/>
</dbReference>
<dbReference type="InterPro" id="IPR003609">
    <property type="entry name" value="Pan_app"/>
</dbReference>
<dbReference type="InterPro" id="IPR000719">
    <property type="entry name" value="Prot_kinase_dom"/>
</dbReference>
<dbReference type="InterPro" id="IPR021820">
    <property type="entry name" value="S-locus_recpt_kinase_C"/>
</dbReference>
<dbReference type="InterPro" id="IPR000858">
    <property type="entry name" value="S_locus_glycoprot_dom"/>
</dbReference>
<dbReference type="InterPro" id="IPR001245">
    <property type="entry name" value="Ser-Thr/Tyr_kinase_cat_dom"/>
</dbReference>
<dbReference type="InterPro" id="IPR008271">
    <property type="entry name" value="Ser/Thr_kinase_AS"/>
</dbReference>
<dbReference type="InterPro" id="IPR024171">
    <property type="entry name" value="SRK-like_kinase"/>
</dbReference>
<dbReference type="PANTHER" id="PTHR27002:SF1026">
    <property type="entry name" value="G-TYPE LECTIN S-RECEPTOR-LIKE SERINE_THREONINE-PROTEIN KINASE SD1-29"/>
    <property type="match status" value="1"/>
</dbReference>
<dbReference type="PANTHER" id="PTHR27002">
    <property type="entry name" value="RECEPTOR-LIKE SERINE/THREONINE-PROTEIN KINASE SD1-8"/>
    <property type="match status" value="1"/>
</dbReference>
<dbReference type="Pfam" id="PF01453">
    <property type="entry name" value="B_lectin"/>
    <property type="match status" value="1"/>
</dbReference>
<dbReference type="Pfam" id="PF11883">
    <property type="entry name" value="DUF3403"/>
    <property type="match status" value="1"/>
</dbReference>
<dbReference type="Pfam" id="PF08276">
    <property type="entry name" value="PAN_2"/>
    <property type="match status" value="1"/>
</dbReference>
<dbReference type="Pfam" id="PF07714">
    <property type="entry name" value="PK_Tyr_Ser-Thr"/>
    <property type="match status" value="1"/>
</dbReference>
<dbReference type="Pfam" id="PF00954">
    <property type="entry name" value="S_locus_glycop"/>
    <property type="match status" value="1"/>
</dbReference>
<dbReference type="PIRSF" id="PIRSF000641">
    <property type="entry name" value="SRK"/>
    <property type="match status" value="1"/>
</dbReference>
<dbReference type="SMART" id="SM00108">
    <property type="entry name" value="B_lectin"/>
    <property type="match status" value="1"/>
</dbReference>
<dbReference type="SMART" id="SM00473">
    <property type="entry name" value="PAN_AP"/>
    <property type="match status" value="1"/>
</dbReference>
<dbReference type="SMART" id="SM00220">
    <property type="entry name" value="S_TKc"/>
    <property type="match status" value="1"/>
</dbReference>
<dbReference type="SUPFAM" id="SSF51110">
    <property type="entry name" value="alpha-D-mannose-specific plant lectins"/>
    <property type="match status" value="1"/>
</dbReference>
<dbReference type="SUPFAM" id="SSF56112">
    <property type="entry name" value="Protein kinase-like (PK-like)"/>
    <property type="match status" value="1"/>
</dbReference>
<dbReference type="PROSITE" id="PS50927">
    <property type="entry name" value="BULB_LECTIN"/>
    <property type="match status" value="1"/>
</dbReference>
<dbReference type="PROSITE" id="PS50948">
    <property type="entry name" value="PAN"/>
    <property type="match status" value="1"/>
</dbReference>
<dbReference type="PROSITE" id="PS50011">
    <property type="entry name" value="PROTEIN_KINASE_DOM"/>
    <property type="match status" value="1"/>
</dbReference>
<dbReference type="PROSITE" id="PS00108">
    <property type="entry name" value="PROTEIN_KINASE_ST"/>
    <property type="match status" value="1"/>
</dbReference>
<evidence type="ECO:0000250" key="1"/>
<evidence type="ECO:0000250" key="2">
    <source>
        <dbReference type="UniProtKB" id="Q9LPZ9"/>
    </source>
</evidence>
<evidence type="ECO:0000255" key="3"/>
<evidence type="ECO:0000255" key="4">
    <source>
        <dbReference type="PROSITE-ProRule" id="PRU00038"/>
    </source>
</evidence>
<evidence type="ECO:0000255" key="5">
    <source>
        <dbReference type="PROSITE-ProRule" id="PRU00159"/>
    </source>
</evidence>
<evidence type="ECO:0000255" key="6">
    <source>
        <dbReference type="PROSITE-ProRule" id="PRU00315"/>
    </source>
</evidence>
<evidence type="ECO:0000255" key="7">
    <source>
        <dbReference type="PROSITE-ProRule" id="PRU10027"/>
    </source>
</evidence>
<evidence type="ECO:0000269" key="8">
    <source>
    </source>
</evidence>
<evidence type="ECO:0000269" key="9">
    <source>
    </source>
</evidence>
<evidence type="ECO:0000269" key="10">
    <source>
    </source>
</evidence>
<evidence type="ECO:0000269" key="11">
    <source>
    </source>
</evidence>
<evidence type="ECO:0000303" key="12">
    <source>
    </source>
</evidence>
<evidence type="ECO:0000303" key="13">
    <source>
    </source>
</evidence>
<evidence type="ECO:0000305" key="14"/>
<evidence type="ECO:0000312" key="15">
    <source>
        <dbReference type="EMBL" id="AAC13903.1"/>
    </source>
</evidence>
<evidence type="ECO:0000312" key="16">
    <source>
        <dbReference type="EMBL" id="AEE33829.1"/>
    </source>
</evidence>
<protein>
    <recommendedName>
        <fullName evidence="14">G-type lectin S-receptor-like serine/threonine-protein kinase SD1-29</fullName>
        <ecNumber evidence="11">2.7.12.1</ecNumber>
    </recommendedName>
    <alternativeName>
        <fullName evidence="13">Protein LIPOOLIGOSACCHARIDE-SPECIFIC REDUCED ELICITATION</fullName>
    </alternativeName>
    <alternativeName>
        <fullName evidence="12">S-domain-1 (SD1) receptor kinase 29</fullName>
        <shortName evidence="12">SD1-29</shortName>
    </alternativeName>
</protein>
<sequence length="805" mass="89897">MGMVLFACLLLLIIFPTCGYAAINTSSPLSIRQTLSSPGGFYELGFFSPNNTQNQYVGIWFKKIVPRVVVWVANRDTPVTSSAANLTISSNGSLILLDGKQDVIWSTGKAFTSNKCHAELLDTGNFVVIDDVSGNKLWQSFEHLGNTMLPQSSLMYDTSNGKKRVLTTWKSNSDPSPGEFSLEITPQIPTQGLIRRGSVPYWRCGPWAKTRFSGISGIDASYVSPFSVVQDTAAGTGSFSYSTLRNYNLSYVTLTPEGKMKILWDDGNNWKLHLSLPENPCDLYGRCGPYGLCVRSDPPKCECLKGFVPKSDEEWGKGNWTSGCVRRTKLSCQAKSSMKTQGKDTDIFYRMTDVKTPDLHQFASFLNAEQCYQGCLGNCSCTAFAYISGIGCLVWNGELADTVQFLSSGEFLFIRLASSELAGSSRRKIIVGTTVSLSIFLILVFAAIMLWRYRAKQNDAWKNGFERQDVSGVNFFEMHTIRTATNNFSPSNKLGQGGFGPVYKGKLVDGKEIGVKRLASSSGQGTEEFMNEITLISKLQHRNLVRLLGYCIDGEEKLLIYEFMVNKSLDIFIFDPCLKFELDWPKRFNIIQGIARGLLYLHRDSRLRVIHRDLKVSNILLDDRMNPKISDFGLARMFQGTQYQDNTRRVVGTLGYMSPEYAWAGLFSEKSDIYSFGVLMLEIISGKRISRFIYGDESKGLLAYTWDSWCETGGSNLLDRDLTDTCQAFEVARCVQIGLLCVQHEAVDRPNTLQVLSMLTSATDLPVPKQPIFAVHTLNDMPMLQANSQDFLSVNEMTESMIQGR</sequence>
<accession>O64782</accession>
<accession>Q8LEY0</accession>
<proteinExistence type="evidence at protein level"/>
<gene>
    <name evidence="12" type="primary">SD129</name>
    <name evidence="13" type="synonym">LORE</name>
    <name evidence="16" type="ordered locus">At1g61380</name>
    <name evidence="15" type="ORF">T1F9.13</name>
</gene>